<keyword id="KW-0539">Nucleus</keyword>
<keyword id="KW-0597">Phosphoprotein</keyword>
<keyword id="KW-1185">Reference proteome</keyword>
<proteinExistence type="evidence at transcript level"/>
<protein>
    <recommendedName>
        <fullName>Atos homolog protein B</fullName>
    </recommendedName>
</protein>
<reference key="1">
    <citation type="journal article" date="2004" name="Genome Res.">
        <title>The status, quality, and expansion of the NIH full-length cDNA project: the Mammalian Gene Collection (MGC).</title>
        <authorList>
            <consortium name="The MGC Project Team"/>
        </authorList>
    </citation>
    <scope>NUCLEOTIDE SEQUENCE [LARGE SCALE MRNA]</scope>
    <source>
        <tissue>Heart</tissue>
    </source>
</reference>
<gene>
    <name evidence="5" type="primary">Atosb</name>
    <name evidence="5" type="synonym">Fam214b</name>
</gene>
<name>ATOSB_RAT</name>
<accession>Q5PQM8</accession>
<comment type="function">
    <text evidence="2">Transcription regulator that may syncronize transcriptional and translational programs.</text>
</comment>
<comment type="subcellular location">
    <subcellularLocation>
        <location evidence="1">Nucleus</location>
    </subcellularLocation>
</comment>
<comment type="domain">
    <text evidence="2">The protein contains a transactivation domain (TAD) which may be required for transcriptional activation of a subset of target genes.</text>
</comment>
<comment type="similarity">
    <text evidence="4">Belongs to the ATOS family.</text>
</comment>
<sequence>MRHVQAELSPSSEPEAGPSQPPVTQGTLQGGLLMGYSPAGGATSPGVYQVSIFSPSAGVSEPPRALKRPAPSTEGPRELKRGPGLGAREGLPPEEPSTVGLVSPEGLGLGLGVASQHFSHHGLRVVEQGGSATSSWTSGTQSTPWPSSNASCNTLHTRDWAFPDQGGQGCLGESPGPAPSGQLHTLDTDLHNLAQIGGKSPVARVGNGSNPWPRESHGTANGHSPEHTPPGPGPPGPCPTKRRLLPAGEALDVSSEDEGPAPRRRRGTLGCPLAANSSDAKATPFWSHLLPGPKEPVLDPTDRSPMGRRLKGARRLKLSSLRTLRKGPGLLSPPSASPFPTPAVSRTLLGNFEESLLRGRFAPSGHIEGFTAEIGASGSYCPQHVTLPVTVTFFDVSEQNAPAPFLGVVDLNPLGRKGYSVPKVGTIQVTLFNPNQTVVKMFLVTFDFSDMPAAHMTFLRHRLFLVPVGEEGNVSPTHRLLCYLLHLRFRSSRSGRLSLHGDIRLLFSRRSLELDTGLPYELQAVTEAPHNPRYSPLP</sequence>
<dbReference type="EMBL" id="BC087107">
    <property type="protein sequence ID" value="AAH87107.1"/>
    <property type="molecule type" value="mRNA"/>
</dbReference>
<dbReference type="RefSeq" id="NP_001013953.1">
    <property type="nucleotide sequence ID" value="NM_001013931.2"/>
</dbReference>
<dbReference type="RefSeq" id="XP_038965454.1">
    <property type="nucleotide sequence ID" value="XM_039109526.1"/>
</dbReference>
<dbReference type="RefSeq" id="XP_038965455.1">
    <property type="nucleotide sequence ID" value="XM_039109527.2"/>
</dbReference>
<dbReference type="RefSeq" id="XP_038965456.1">
    <property type="nucleotide sequence ID" value="XM_039109528.2"/>
</dbReference>
<dbReference type="RefSeq" id="XP_038965457.1">
    <property type="nucleotide sequence ID" value="XM_039109529.1"/>
</dbReference>
<dbReference type="RefSeq" id="XP_038965458.1">
    <property type="nucleotide sequence ID" value="XM_039109530.1"/>
</dbReference>
<dbReference type="RefSeq" id="XP_063143441.1">
    <property type="nucleotide sequence ID" value="XM_063287371.1"/>
</dbReference>
<dbReference type="RefSeq" id="XP_063143442.1">
    <property type="nucleotide sequence ID" value="XM_063287372.1"/>
</dbReference>
<dbReference type="RefSeq" id="XP_063143443.1">
    <property type="nucleotide sequence ID" value="XM_063287373.1"/>
</dbReference>
<dbReference type="RefSeq" id="XP_063143444.1">
    <property type="nucleotide sequence ID" value="XM_063287374.1"/>
</dbReference>
<dbReference type="BioGRID" id="255803">
    <property type="interactions" value="1"/>
</dbReference>
<dbReference type="FunCoup" id="Q5PQM8">
    <property type="interactions" value="371"/>
</dbReference>
<dbReference type="STRING" id="10116.ENSRNOP00000012386"/>
<dbReference type="GlyGen" id="Q5PQM8">
    <property type="glycosylation" value="1 site"/>
</dbReference>
<dbReference type="PhosphoSitePlus" id="Q5PQM8"/>
<dbReference type="PaxDb" id="10116-ENSRNOP00000012386"/>
<dbReference type="GeneID" id="298201"/>
<dbReference type="KEGG" id="rno:298201"/>
<dbReference type="UCSC" id="RGD:1311249">
    <property type="organism name" value="rat"/>
</dbReference>
<dbReference type="AGR" id="RGD:1311249"/>
<dbReference type="CTD" id="80256"/>
<dbReference type="RGD" id="1311249">
    <property type="gene designation" value="Atosb"/>
</dbReference>
<dbReference type="VEuPathDB" id="HostDB:ENSRNOG00000009323"/>
<dbReference type="eggNOG" id="KOG2306">
    <property type="taxonomic scope" value="Eukaryota"/>
</dbReference>
<dbReference type="HOGENOM" id="CLU_031463_0_0_1"/>
<dbReference type="InParanoid" id="Q5PQM8"/>
<dbReference type="OrthoDB" id="8625101at2759"/>
<dbReference type="PhylomeDB" id="Q5PQM8"/>
<dbReference type="TreeFam" id="TF325496"/>
<dbReference type="PRO" id="PR:Q5PQM8"/>
<dbReference type="Proteomes" id="UP000002494">
    <property type="component" value="Chromosome 5"/>
</dbReference>
<dbReference type="Bgee" id="ENSRNOG00000009323">
    <property type="expression patterns" value="Expressed in testis and 18 other cell types or tissues"/>
</dbReference>
<dbReference type="GO" id="GO:0005634">
    <property type="term" value="C:nucleus"/>
    <property type="evidence" value="ECO:0007669"/>
    <property type="project" value="UniProtKB-SubCell"/>
</dbReference>
<dbReference type="InterPro" id="IPR033473">
    <property type="entry name" value="Atos-like_C"/>
</dbReference>
<dbReference type="InterPro" id="IPR025261">
    <property type="entry name" value="Atos-like_cons_dom"/>
</dbReference>
<dbReference type="InterPro" id="IPR051506">
    <property type="entry name" value="ATOS_Transcription_Regulators"/>
</dbReference>
<dbReference type="PANTHER" id="PTHR13199:SF12">
    <property type="entry name" value="ATOS HOMOLOG PROTEIN B"/>
    <property type="match status" value="1"/>
</dbReference>
<dbReference type="PANTHER" id="PTHR13199">
    <property type="entry name" value="GH03947P"/>
    <property type="match status" value="1"/>
</dbReference>
<dbReference type="Pfam" id="PF13889">
    <property type="entry name" value="Chromosome_seg"/>
    <property type="match status" value="1"/>
</dbReference>
<dbReference type="Pfam" id="PF13915">
    <property type="entry name" value="DUF4210"/>
    <property type="match status" value="1"/>
</dbReference>
<dbReference type="SMART" id="SM01177">
    <property type="entry name" value="DUF4210"/>
    <property type="match status" value="1"/>
</dbReference>
<evidence type="ECO:0000250" key="1">
    <source>
        <dbReference type="UniProtKB" id="Q7JXG9"/>
    </source>
</evidence>
<evidence type="ECO:0000250" key="2">
    <source>
        <dbReference type="UniProtKB" id="Q8BR27"/>
    </source>
</evidence>
<evidence type="ECO:0000256" key="3">
    <source>
        <dbReference type="SAM" id="MobiDB-lite"/>
    </source>
</evidence>
<evidence type="ECO:0000305" key="4"/>
<evidence type="ECO:0000312" key="5">
    <source>
        <dbReference type="RGD" id="1311249"/>
    </source>
</evidence>
<feature type="chain" id="PRO_0000313624" description="Atos homolog protein B">
    <location>
        <begin position="1"/>
        <end position="538"/>
    </location>
</feature>
<feature type="region of interest" description="Disordered" evidence="3">
    <location>
        <begin position="1"/>
        <end position="103"/>
    </location>
</feature>
<feature type="region of interest" description="Disordered" evidence="3">
    <location>
        <begin position="130"/>
        <end position="149"/>
    </location>
</feature>
<feature type="region of interest" description="Disordered" evidence="3">
    <location>
        <begin position="163"/>
        <end position="185"/>
    </location>
</feature>
<feature type="region of interest" description="Disordered" evidence="3">
    <location>
        <begin position="199"/>
        <end position="272"/>
    </location>
</feature>
<feature type="region of interest" description="Required for macropage invasion" evidence="2">
    <location>
        <begin position="348"/>
        <end position="430"/>
    </location>
</feature>
<feature type="region of interest" description="Transactivation domain 1 (TAD1)" evidence="2">
    <location>
        <begin position="436"/>
        <end position="444"/>
    </location>
</feature>
<feature type="compositionally biased region" description="Low complexity" evidence="3">
    <location>
        <begin position="130"/>
        <end position="148"/>
    </location>
</feature>
<feature type="compositionally biased region" description="Pro residues" evidence="3">
    <location>
        <begin position="227"/>
        <end position="238"/>
    </location>
</feature>
<feature type="modified residue" description="Phosphoserine" evidence="2">
    <location>
        <position position="254"/>
    </location>
</feature>
<feature type="modified residue" description="Phosphoserine" evidence="2">
    <location>
        <position position="255"/>
    </location>
</feature>
<organism>
    <name type="scientific">Rattus norvegicus</name>
    <name type="common">Rat</name>
    <dbReference type="NCBI Taxonomy" id="10116"/>
    <lineage>
        <taxon>Eukaryota</taxon>
        <taxon>Metazoa</taxon>
        <taxon>Chordata</taxon>
        <taxon>Craniata</taxon>
        <taxon>Vertebrata</taxon>
        <taxon>Euteleostomi</taxon>
        <taxon>Mammalia</taxon>
        <taxon>Eutheria</taxon>
        <taxon>Euarchontoglires</taxon>
        <taxon>Glires</taxon>
        <taxon>Rodentia</taxon>
        <taxon>Myomorpha</taxon>
        <taxon>Muroidea</taxon>
        <taxon>Muridae</taxon>
        <taxon>Murinae</taxon>
        <taxon>Rattus</taxon>
    </lineage>
</organism>